<accession>Q2S9Z3</accession>
<reference key="1">
    <citation type="journal article" date="2005" name="Nucleic Acids Res.">
        <title>Genomic blueprint of Hahella chejuensis, a marine microbe producing an algicidal agent.</title>
        <authorList>
            <person name="Jeong H."/>
            <person name="Yim J.H."/>
            <person name="Lee C."/>
            <person name="Choi S.-H."/>
            <person name="Park Y.K."/>
            <person name="Yoon S.H."/>
            <person name="Hur C.-G."/>
            <person name="Kang H.-Y."/>
            <person name="Kim D."/>
            <person name="Lee H.H."/>
            <person name="Park K.H."/>
            <person name="Park S.-H."/>
            <person name="Park H.-S."/>
            <person name="Lee H.K."/>
            <person name="Oh T.K."/>
            <person name="Kim J.F."/>
        </authorList>
    </citation>
    <scope>NUCLEOTIDE SEQUENCE [LARGE SCALE GENOMIC DNA]</scope>
    <source>
        <strain>KCTC 2396</strain>
    </source>
</reference>
<dbReference type="EC" id="6.3.2.8" evidence="1"/>
<dbReference type="EMBL" id="CP000155">
    <property type="protein sequence ID" value="ABC32531.1"/>
    <property type="molecule type" value="Genomic_DNA"/>
</dbReference>
<dbReference type="RefSeq" id="WP_011399590.1">
    <property type="nucleotide sequence ID" value="NC_007645.1"/>
</dbReference>
<dbReference type="SMR" id="Q2S9Z3"/>
<dbReference type="STRING" id="349521.HCH_05882"/>
<dbReference type="KEGG" id="hch:HCH_05882"/>
<dbReference type="eggNOG" id="COG0773">
    <property type="taxonomic scope" value="Bacteria"/>
</dbReference>
<dbReference type="HOGENOM" id="CLU_028104_2_2_6"/>
<dbReference type="OrthoDB" id="9804126at2"/>
<dbReference type="UniPathway" id="UPA00219"/>
<dbReference type="Proteomes" id="UP000000238">
    <property type="component" value="Chromosome"/>
</dbReference>
<dbReference type="GO" id="GO:0005737">
    <property type="term" value="C:cytoplasm"/>
    <property type="evidence" value="ECO:0007669"/>
    <property type="project" value="UniProtKB-SubCell"/>
</dbReference>
<dbReference type="GO" id="GO:0005524">
    <property type="term" value="F:ATP binding"/>
    <property type="evidence" value="ECO:0007669"/>
    <property type="project" value="UniProtKB-UniRule"/>
</dbReference>
<dbReference type="GO" id="GO:0008763">
    <property type="term" value="F:UDP-N-acetylmuramate-L-alanine ligase activity"/>
    <property type="evidence" value="ECO:0007669"/>
    <property type="project" value="UniProtKB-UniRule"/>
</dbReference>
<dbReference type="GO" id="GO:0051301">
    <property type="term" value="P:cell division"/>
    <property type="evidence" value="ECO:0007669"/>
    <property type="project" value="UniProtKB-KW"/>
</dbReference>
<dbReference type="GO" id="GO:0071555">
    <property type="term" value="P:cell wall organization"/>
    <property type="evidence" value="ECO:0007669"/>
    <property type="project" value="UniProtKB-KW"/>
</dbReference>
<dbReference type="GO" id="GO:0009252">
    <property type="term" value="P:peptidoglycan biosynthetic process"/>
    <property type="evidence" value="ECO:0007669"/>
    <property type="project" value="UniProtKB-UniRule"/>
</dbReference>
<dbReference type="GO" id="GO:0008360">
    <property type="term" value="P:regulation of cell shape"/>
    <property type="evidence" value="ECO:0007669"/>
    <property type="project" value="UniProtKB-KW"/>
</dbReference>
<dbReference type="FunFam" id="3.40.1190.10:FF:000001">
    <property type="entry name" value="UDP-N-acetylmuramate--L-alanine ligase"/>
    <property type="match status" value="1"/>
</dbReference>
<dbReference type="FunFam" id="3.40.50.720:FF:000046">
    <property type="entry name" value="UDP-N-acetylmuramate--L-alanine ligase"/>
    <property type="match status" value="1"/>
</dbReference>
<dbReference type="Gene3D" id="3.90.190.20">
    <property type="entry name" value="Mur ligase, C-terminal domain"/>
    <property type="match status" value="1"/>
</dbReference>
<dbReference type="Gene3D" id="3.40.1190.10">
    <property type="entry name" value="Mur-like, catalytic domain"/>
    <property type="match status" value="1"/>
</dbReference>
<dbReference type="Gene3D" id="3.40.50.720">
    <property type="entry name" value="NAD(P)-binding Rossmann-like Domain"/>
    <property type="match status" value="1"/>
</dbReference>
<dbReference type="HAMAP" id="MF_00046">
    <property type="entry name" value="MurC"/>
    <property type="match status" value="1"/>
</dbReference>
<dbReference type="InterPro" id="IPR036565">
    <property type="entry name" value="Mur-like_cat_sf"/>
</dbReference>
<dbReference type="InterPro" id="IPR004101">
    <property type="entry name" value="Mur_ligase_C"/>
</dbReference>
<dbReference type="InterPro" id="IPR036615">
    <property type="entry name" value="Mur_ligase_C_dom_sf"/>
</dbReference>
<dbReference type="InterPro" id="IPR013221">
    <property type="entry name" value="Mur_ligase_cen"/>
</dbReference>
<dbReference type="InterPro" id="IPR000713">
    <property type="entry name" value="Mur_ligase_N"/>
</dbReference>
<dbReference type="InterPro" id="IPR050061">
    <property type="entry name" value="MurCDEF_pg_biosynth"/>
</dbReference>
<dbReference type="InterPro" id="IPR005758">
    <property type="entry name" value="UDP-N-AcMur_Ala_ligase_MurC"/>
</dbReference>
<dbReference type="NCBIfam" id="TIGR01082">
    <property type="entry name" value="murC"/>
    <property type="match status" value="1"/>
</dbReference>
<dbReference type="PANTHER" id="PTHR43445:SF3">
    <property type="entry name" value="UDP-N-ACETYLMURAMATE--L-ALANINE LIGASE"/>
    <property type="match status" value="1"/>
</dbReference>
<dbReference type="PANTHER" id="PTHR43445">
    <property type="entry name" value="UDP-N-ACETYLMURAMATE--L-ALANINE LIGASE-RELATED"/>
    <property type="match status" value="1"/>
</dbReference>
<dbReference type="Pfam" id="PF01225">
    <property type="entry name" value="Mur_ligase"/>
    <property type="match status" value="1"/>
</dbReference>
<dbReference type="Pfam" id="PF02875">
    <property type="entry name" value="Mur_ligase_C"/>
    <property type="match status" value="1"/>
</dbReference>
<dbReference type="Pfam" id="PF08245">
    <property type="entry name" value="Mur_ligase_M"/>
    <property type="match status" value="1"/>
</dbReference>
<dbReference type="SUPFAM" id="SSF51984">
    <property type="entry name" value="MurCD N-terminal domain"/>
    <property type="match status" value="1"/>
</dbReference>
<dbReference type="SUPFAM" id="SSF53623">
    <property type="entry name" value="MurD-like peptide ligases, catalytic domain"/>
    <property type="match status" value="1"/>
</dbReference>
<dbReference type="SUPFAM" id="SSF53244">
    <property type="entry name" value="MurD-like peptide ligases, peptide-binding domain"/>
    <property type="match status" value="1"/>
</dbReference>
<sequence>MKNTVWGPPEMRRIRRIHFVGIGGSGMCGIAEVLLNQGYEISGSDLKESATTRRLSDMGASITFGHTAQNIAGANVVVTSSAVAKDNPEVTAANEQRIPVIARAEMLAELMRYRHGVAIAGTHGKTTTTSLMASVLGEAGLDPTFVIGGRLNSAGTNAKLGASRYLVAEADESDASFLHLTPMVSVVTNIDADHMHTYGGDFEKLKQTFVDFLHNLPFYGVAVMCYDDPVVREIIPRVGRSVITYGFNEKADVRAVDIAQQGMQTSFTAKRPGGHPDLRISLNMPGKHNVLNALAVIAVATDEGIADEAIVSALNKFQGVGRRFQVYGNYPVDEGSVMLVDDYGHHPREVDATIKAIRDGWPEKRLVAVFQPHRYTRTRDLYEDFVQVLSKVDVLVLMDVYPAGEKEIPGADGRSLCRSIRQRGQLDPIFIERGQDVKAVLSGVLQDGDLLLTQGAGDIGAVAGVLAEGGLQ</sequence>
<name>MURC_HAHCH</name>
<gene>
    <name evidence="1" type="primary">murC</name>
    <name type="ordered locus">HCH_05882</name>
</gene>
<feature type="chain" id="PRO_0000242560" description="UDP-N-acetylmuramate--L-alanine ligase">
    <location>
        <begin position="1"/>
        <end position="472"/>
    </location>
</feature>
<feature type="binding site" evidence="1">
    <location>
        <begin position="121"/>
        <end position="127"/>
    </location>
    <ligand>
        <name>ATP</name>
        <dbReference type="ChEBI" id="CHEBI:30616"/>
    </ligand>
</feature>
<comment type="function">
    <text evidence="1">Cell wall formation.</text>
</comment>
<comment type="catalytic activity">
    <reaction evidence="1">
        <text>UDP-N-acetyl-alpha-D-muramate + L-alanine + ATP = UDP-N-acetyl-alpha-D-muramoyl-L-alanine + ADP + phosphate + H(+)</text>
        <dbReference type="Rhea" id="RHEA:23372"/>
        <dbReference type="ChEBI" id="CHEBI:15378"/>
        <dbReference type="ChEBI" id="CHEBI:30616"/>
        <dbReference type="ChEBI" id="CHEBI:43474"/>
        <dbReference type="ChEBI" id="CHEBI:57972"/>
        <dbReference type="ChEBI" id="CHEBI:70757"/>
        <dbReference type="ChEBI" id="CHEBI:83898"/>
        <dbReference type="ChEBI" id="CHEBI:456216"/>
        <dbReference type="EC" id="6.3.2.8"/>
    </reaction>
</comment>
<comment type="pathway">
    <text evidence="1">Cell wall biogenesis; peptidoglycan biosynthesis.</text>
</comment>
<comment type="subcellular location">
    <subcellularLocation>
        <location evidence="1">Cytoplasm</location>
    </subcellularLocation>
</comment>
<comment type="similarity">
    <text evidence="1">Belongs to the MurCDEF family.</text>
</comment>
<keyword id="KW-0067">ATP-binding</keyword>
<keyword id="KW-0131">Cell cycle</keyword>
<keyword id="KW-0132">Cell division</keyword>
<keyword id="KW-0133">Cell shape</keyword>
<keyword id="KW-0961">Cell wall biogenesis/degradation</keyword>
<keyword id="KW-0963">Cytoplasm</keyword>
<keyword id="KW-0436">Ligase</keyword>
<keyword id="KW-0547">Nucleotide-binding</keyword>
<keyword id="KW-0573">Peptidoglycan synthesis</keyword>
<keyword id="KW-1185">Reference proteome</keyword>
<proteinExistence type="inferred from homology"/>
<organism>
    <name type="scientific">Hahella chejuensis (strain KCTC 2396)</name>
    <dbReference type="NCBI Taxonomy" id="349521"/>
    <lineage>
        <taxon>Bacteria</taxon>
        <taxon>Pseudomonadati</taxon>
        <taxon>Pseudomonadota</taxon>
        <taxon>Gammaproteobacteria</taxon>
        <taxon>Oceanospirillales</taxon>
        <taxon>Hahellaceae</taxon>
        <taxon>Hahella</taxon>
    </lineage>
</organism>
<protein>
    <recommendedName>
        <fullName evidence="1">UDP-N-acetylmuramate--L-alanine ligase</fullName>
        <ecNumber evidence="1">6.3.2.8</ecNumber>
    </recommendedName>
    <alternativeName>
        <fullName evidence="1">UDP-N-acetylmuramoyl-L-alanine synthetase</fullName>
    </alternativeName>
</protein>
<evidence type="ECO:0000255" key="1">
    <source>
        <dbReference type="HAMAP-Rule" id="MF_00046"/>
    </source>
</evidence>